<keyword id="KW-0378">Hydrolase</keyword>
<keyword id="KW-0479">Metal-binding</keyword>
<keyword id="KW-0862">Zinc</keyword>
<reference key="1">
    <citation type="journal article" date="2008" name="J. Bacteriol.">
        <title>The pangenome structure of Escherichia coli: comparative genomic analysis of E. coli commensal and pathogenic isolates.</title>
        <authorList>
            <person name="Rasko D.A."/>
            <person name="Rosovitz M.J."/>
            <person name="Myers G.S.A."/>
            <person name="Mongodin E.F."/>
            <person name="Fricke W.F."/>
            <person name="Gajer P."/>
            <person name="Crabtree J."/>
            <person name="Sebaihia M."/>
            <person name="Thomson N.R."/>
            <person name="Chaudhuri R."/>
            <person name="Henderson I.R."/>
            <person name="Sperandio V."/>
            <person name="Ravel J."/>
        </authorList>
    </citation>
    <scope>NUCLEOTIDE SEQUENCE [LARGE SCALE GENOMIC DNA]</scope>
    <source>
        <strain>HS</strain>
    </source>
</reference>
<protein>
    <recommendedName>
        <fullName evidence="1">Hydroxyacylglutathione hydrolase</fullName>
        <ecNumber evidence="1">3.1.2.6</ecNumber>
    </recommendedName>
    <alternativeName>
        <fullName evidence="1">Glyoxalase II</fullName>
        <shortName evidence="1">Glx II</shortName>
    </alternativeName>
</protein>
<comment type="function">
    <text evidence="1">Thiolesterase that catalyzes the hydrolysis of S-D-lactoyl-glutathione to form glutathione and D-lactic acid.</text>
</comment>
<comment type="catalytic activity">
    <reaction evidence="1">
        <text>an S-(2-hydroxyacyl)glutathione + H2O = a 2-hydroxy carboxylate + glutathione + H(+)</text>
        <dbReference type="Rhea" id="RHEA:21864"/>
        <dbReference type="ChEBI" id="CHEBI:15377"/>
        <dbReference type="ChEBI" id="CHEBI:15378"/>
        <dbReference type="ChEBI" id="CHEBI:57925"/>
        <dbReference type="ChEBI" id="CHEBI:58896"/>
        <dbReference type="ChEBI" id="CHEBI:71261"/>
        <dbReference type="EC" id="3.1.2.6"/>
    </reaction>
</comment>
<comment type="cofactor">
    <cofactor evidence="1">
        <name>Zn(2+)</name>
        <dbReference type="ChEBI" id="CHEBI:29105"/>
    </cofactor>
    <text evidence="1">Binds 2 Zn(2+) ions per subunit.</text>
</comment>
<comment type="pathway">
    <text evidence="1">Secondary metabolite metabolism; methylglyoxal degradation; (R)-lactate from methylglyoxal: step 2/2.</text>
</comment>
<comment type="subunit">
    <text evidence="1">Monomer.</text>
</comment>
<comment type="similarity">
    <text evidence="1">Belongs to the metallo-beta-lactamase superfamily. Glyoxalase II family.</text>
</comment>
<organism>
    <name type="scientific">Escherichia coli O9:H4 (strain HS)</name>
    <dbReference type="NCBI Taxonomy" id="331112"/>
    <lineage>
        <taxon>Bacteria</taxon>
        <taxon>Pseudomonadati</taxon>
        <taxon>Pseudomonadota</taxon>
        <taxon>Gammaproteobacteria</taxon>
        <taxon>Enterobacterales</taxon>
        <taxon>Enterobacteriaceae</taxon>
        <taxon>Escherichia</taxon>
    </lineage>
</organism>
<name>GLO2_ECOHS</name>
<accession>A7ZWF4</accession>
<proteinExistence type="inferred from homology"/>
<sequence length="251" mass="28464">MNLNSIPAFDDNYIWVLNDEAGRCLIVDPGDAEPVLNAITANNWQPEAIFLTHHHHDHVGGVKELVEKFPQIVVYGPQETQDKGTTQVVKDGETAFVLGHEFSVIATPGHTLGHICYFSKPYLFCGDTLFSGGCGRLFEGTASQMYQSLKKLSALPDDTLVCCAHEYTLSNMKFALSILPHDLSINDYYRKVKELRAKNQITLPVILKNERQINVFLRTEDIDLINVINEETLLQQPEERFAWLRSKKDRF</sequence>
<feature type="chain" id="PRO_1000068213" description="Hydroxyacylglutathione hydrolase">
    <location>
        <begin position="1"/>
        <end position="251"/>
    </location>
</feature>
<feature type="binding site" evidence="1">
    <location>
        <position position="53"/>
    </location>
    <ligand>
        <name>Zn(2+)</name>
        <dbReference type="ChEBI" id="CHEBI:29105"/>
        <label>1</label>
    </ligand>
</feature>
<feature type="binding site" evidence="1">
    <location>
        <position position="55"/>
    </location>
    <ligand>
        <name>Zn(2+)</name>
        <dbReference type="ChEBI" id="CHEBI:29105"/>
        <label>1</label>
    </ligand>
</feature>
<feature type="binding site" evidence="1">
    <location>
        <position position="57"/>
    </location>
    <ligand>
        <name>Zn(2+)</name>
        <dbReference type="ChEBI" id="CHEBI:29105"/>
        <label>2</label>
    </ligand>
</feature>
<feature type="binding site" evidence="1">
    <location>
        <position position="58"/>
    </location>
    <ligand>
        <name>Zn(2+)</name>
        <dbReference type="ChEBI" id="CHEBI:29105"/>
        <label>2</label>
    </ligand>
</feature>
<feature type="binding site" evidence="1">
    <location>
        <position position="110"/>
    </location>
    <ligand>
        <name>Zn(2+)</name>
        <dbReference type="ChEBI" id="CHEBI:29105"/>
        <label>1</label>
    </ligand>
</feature>
<feature type="binding site" evidence="1">
    <location>
        <position position="127"/>
    </location>
    <ligand>
        <name>Zn(2+)</name>
        <dbReference type="ChEBI" id="CHEBI:29105"/>
        <label>1</label>
    </ligand>
</feature>
<feature type="binding site" evidence="1">
    <location>
        <position position="127"/>
    </location>
    <ligand>
        <name>Zn(2+)</name>
        <dbReference type="ChEBI" id="CHEBI:29105"/>
        <label>2</label>
    </ligand>
</feature>
<feature type="binding site" evidence="1">
    <location>
        <position position="165"/>
    </location>
    <ligand>
        <name>Zn(2+)</name>
        <dbReference type="ChEBI" id="CHEBI:29105"/>
        <label>2</label>
    </ligand>
</feature>
<evidence type="ECO:0000255" key="1">
    <source>
        <dbReference type="HAMAP-Rule" id="MF_01374"/>
    </source>
</evidence>
<dbReference type="EC" id="3.1.2.6" evidence="1"/>
<dbReference type="EMBL" id="CP000802">
    <property type="protein sequence ID" value="ABV04608.1"/>
    <property type="molecule type" value="Genomic_DNA"/>
</dbReference>
<dbReference type="RefSeq" id="WP_001052750.1">
    <property type="nucleotide sequence ID" value="NC_009800.1"/>
</dbReference>
<dbReference type="SMR" id="A7ZWF4"/>
<dbReference type="KEGG" id="ecx:EcHS_A0216"/>
<dbReference type="HOGENOM" id="CLU_030571_4_1_6"/>
<dbReference type="UniPathway" id="UPA00619">
    <property type="reaction ID" value="UER00676"/>
</dbReference>
<dbReference type="GO" id="GO:0004416">
    <property type="term" value="F:hydroxyacylglutathione hydrolase activity"/>
    <property type="evidence" value="ECO:0007669"/>
    <property type="project" value="UniProtKB-UniRule"/>
</dbReference>
<dbReference type="GO" id="GO:0046872">
    <property type="term" value="F:metal ion binding"/>
    <property type="evidence" value="ECO:0007669"/>
    <property type="project" value="UniProtKB-KW"/>
</dbReference>
<dbReference type="GO" id="GO:0019243">
    <property type="term" value="P:methylglyoxal catabolic process to D-lactate via S-lactoyl-glutathione"/>
    <property type="evidence" value="ECO:0007669"/>
    <property type="project" value="InterPro"/>
</dbReference>
<dbReference type="CDD" id="cd07723">
    <property type="entry name" value="hydroxyacylglutathione_hydrolase_MBL-fold"/>
    <property type="match status" value="1"/>
</dbReference>
<dbReference type="FunFam" id="3.60.15.10:FF:000012">
    <property type="entry name" value="Hydroxyacylglutathione hydrolase"/>
    <property type="match status" value="1"/>
</dbReference>
<dbReference type="Gene3D" id="3.60.15.10">
    <property type="entry name" value="Ribonuclease Z/Hydroxyacylglutathione hydrolase-like"/>
    <property type="match status" value="1"/>
</dbReference>
<dbReference type="HAMAP" id="MF_01374">
    <property type="entry name" value="Glyoxalase_2"/>
    <property type="match status" value="1"/>
</dbReference>
<dbReference type="InterPro" id="IPR035680">
    <property type="entry name" value="Clx_II_MBL"/>
</dbReference>
<dbReference type="InterPro" id="IPR050110">
    <property type="entry name" value="Glyoxalase_II_hydrolase"/>
</dbReference>
<dbReference type="InterPro" id="IPR032282">
    <property type="entry name" value="HAGH_C"/>
</dbReference>
<dbReference type="InterPro" id="IPR017782">
    <property type="entry name" value="Hydroxyacylglutathione_Hdrlase"/>
</dbReference>
<dbReference type="InterPro" id="IPR001279">
    <property type="entry name" value="Metallo-B-lactamas"/>
</dbReference>
<dbReference type="InterPro" id="IPR036866">
    <property type="entry name" value="RibonucZ/Hydroxyglut_hydro"/>
</dbReference>
<dbReference type="NCBIfam" id="TIGR03413">
    <property type="entry name" value="GSH_gloB"/>
    <property type="match status" value="1"/>
</dbReference>
<dbReference type="NCBIfam" id="NF007597">
    <property type="entry name" value="PRK10241.1"/>
    <property type="match status" value="1"/>
</dbReference>
<dbReference type="PANTHER" id="PTHR43705">
    <property type="entry name" value="HYDROXYACYLGLUTATHIONE HYDROLASE"/>
    <property type="match status" value="1"/>
</dbReference>
<dbReference type="PANTHER" id="PTHR43705:SF1">
    <property type="entry name" value="HYDROXYACYLGLUTATHIONE HYDROLASE GLOB"/>
    <property type="match status" value="1"/>
</dbReference>
<dbReference type="Pfam" id="PF16123">
    <property type="entry name" value="HAGH_C"/>
    <property type="match status" value="1"/>
</dbReference>
<dbReference type="Pfam" id="PF00753">
    <property type="entry name" value="Lactamase_B"/>
    <property type="match status" value="1"/>
</dbReference>
<dbReference type="PIRSF" id="PIRSF005457">
    <property type="entry name" value="Glx"/>
    <property type="match status" value="1"/>
</dbReference>
<dbReference type="SMART" id="SM00849">
    <property type="entry name" value="Lactamase_B"/>
    <property type="match status" value="1"/>
</dbReference>
<dbReference type="SUPFAM" id="SSF56281">
    <property type="entry name" value="Metallo-hydrolase/oxidoreductase"/>
    <property type="match status" value="1"/>
</dbReference>
<gene>
    <name evidence="1" type="primary">gloB</name>
    <name type="ordered locus">EcHS_A0216</name>
</gene>